<reference key="1">
    <citation type="journal article" date="1999" name="Nature">
        <title>Sequence and analysis of chromosome 2 of the plant Arabidopsis thaliana.</title>
        <authorList>
            <person name="Lin X."/>
            <person name="Kaul S."/>
            <person name="Rounsley S.D."/>
            <person name="Shea T.P."/>
            <person name="Benito M.-I."/>
            <person name="Town C.D."/>
            <person name="Fujii C.Y."/>
            <person name="Mason T.M."/>
            <person name="Bowman C.L."/>
            <person name="Barnstead M.E."/>
            <person name="Feldblyum T.V."/>
            <person name="Buell C.R."/>
            <person name="Ketchum K.A."/>
            <person name="Lee J.J."/>
            <person name="Ronning C.M."/>
            <person name="Koo H.L."/>
            <person name="Moffat K.S."/>
            <person name="Cronin L.A."/>
            <person name="Shen M."/>
            <person name="Pai G."/>
            <person name="Van Aken S."/>
            <person name="Umayam L."/>
            <person name="Tallon L.J."/>
            <person name="Gill J.E."/>
            <person name="Adams M.D."/>
            <person name="Carrera A.J."/>
            <person name="Creasy T.H."/>
            <person name="Goodman H.M."/>
            <person name="Somerville C.R."/>
            <person name="Copenhaver G.P."/>
            <person name="Preuss D."/>
            <person name="Nierman W.C."/>
            <person name="White O."/>
            <person name="Eisen J.A."/>
            <person name="Salzberg S.L."/>
            <person name="Fraser C.M."/>
            <person name="Venter J.C."/>
        </authorList>
    </citation>
    <scope>NUCLEOTIDE SEQUENCE [LARGE SCALE GENOMIC DNA]</scope>
    <source>
        <strain>cv. Columbia</strain>
    </source>
</reference>
<reference key="2">
    <citation type="journal article" date="2017" name="Plant J.">
        <title>Araport11: a complete reannotation of the Arabidopsis thaliana reference genome.</title>
        <authorList>
            <person name="Cheng C.Y."/>
            <person name="Krishnakumar V."/>
            <person name="Chan A.P."/>
            <person name="Thibaud-Nissen F."/>
            <person name="Schobel S."/>
            <person name="Town C.D."/>
        </authorList>
    </citation>
    <scope>GENOME REANNOTATION</scope>
    <source>
        <strain>cv. Columbia</strain>
    </source>
</reference>
<reference key="3">
    <citation type="journal article" date="2002" name="Science">
        <title>Functional annotation of a full-length Arabidopsis cDNA collection.</title>
        <authorList>
            <person name="Seki M."/>
            <person name="Narusaka M."/>
            <person name="Kamiya A."/>
            <person name="Ishida J."/>
            <person name="Satou M."/>
            <person name="Sakurai T."/>
            <person name="Nakajima M."/>
            <person name="Enju A."/>
            <person name="Akiyama K."/>
            <person name="Oono Y."/>
            <person name="Muramatsu M."/>
            <person name="Hayashizaki Y."/>
            <person name="Kawai J."/>
            <person name="Carninci P."/>
            <person name="Itoh M."/>
            <person name="Ishii Y."/>
            <person name="Arakawa T."/>
            <person name="Shibata K."/>
            <person name="Shinagawa A."/>
            <person name="Shinozaki K."/>
        </authorList>
    </citation>
    <scope>NUCLEOTIDE SEQUENCE [LARGE SCALE MRNA]</scope>
    <source>
        <strain>cv. Columbia</strain>
    </source>
</reference>
<reference key="4">
    <citation type="journal article" date="2003" name="Science">
        <title>Empirical analysis of transcriptional activity in the Arabidopsis genome.</title>
        <authorList>
            <person name="Yamada K."/>
            <person name="Lim J."/>
            <person name="Dale J.M."/>
            <person name="Chen H."/>
            <person name="Shinn P."/>
            <person name="Palm C.J."/>
            <person name="Southwick A.M."/>
            <person name="Wu H.C."/>
            <person name="Kim C.J."/>
            <person name="Nguyen M."/>
            <person name="Pham P.K."/>
            <person name="Cheuk R.F."/>
            <person name="Karlin-Newmann G."/>
            <person name="Liu S.X."/>
            <person name="Lam B."/>
            <person name="Sakano H."/>
            <person name="Wu T."/>
            <person name="Yu G."/>
            <person name="Miranda M."/>
            <person name="Quach H.L."/>
            <person name="Tripp M."/>
            <person name="Chang C.H."/>
            <person name="Lee J.M."/>
            <person name="Toriumi M.J."/>
            <person name="Chan M.M."/>
            <person name="Tang C.C."/>
            <person name="Onodera C.S."/>
            <person name="Deng J.M."/>
            <person name="Akiyama K."/>
            <person name="Ansari Y."/>
            <person name="Arakawa T."/>
            <person name="Banh J."/>
            <person name="Banno F."/>
            <person name="Bowser L."/>
            <person name="Brooks S.Y."/>
            <person name="Carninci P."/>
            <person name="Chao Q."/>
            <person name="Choy N."/>
            <person name="Enju A."/>
            <person name="Goldsmith A.D."/>
            <person name="Gurjal M."/>
            <person name="Hansen N.F."/>
            <person name="Hayashizaki Y."/>
            <person name="Johnson-Hopson C."/>
            <person name="Hsuan V.W."/>
            <person name="Iida K."/>
            <person name="Karnes M."/>
            <person name="Khan S."/>
            <person name="Koesema E."/>
            <person name="Ishida J."/>
            <person name="Jiang P.X."/>
            <person name="Jones T."/>
            <person name="Kawai J."/>
            <person name="Kamiya A."/>
            <person name="Meyers C."/>
            <person name="Nakajima M."/>
            <person name="Narusaka M."/>
            <person name="Seki M."/>
            <person name="Sakurai T."/>
            <person name="Satou M."/>
            <person name="Tamse R."/>
            <person name="Vaysberg M."/>
            <person name="Wallender E.K."/>
            <person name="Wong C."/>
            <person name="Yamamura Y."/>
            <person name="Yuan S."/>
            <person name="Shinozaki K."/>
            <person name="Davis R.W."/>
            <person name="Theologis A."/>
            <person name="Ecker J.R."/>
        </authorList>
    </citation>
    <scope>NUCLEOTIDE SEQUENCE [LARGE SCALE MRNA]</scope>
    <source>
        <strain>cv. Columbia</strain>
    </source>
</reference>
<reference key="5">
    <citation type="journal article" date="2006" name="Proc. Natl. Acad. Sci. U.S.A.">
        <title>REVERSION-TO-ETHYLENE SENSITIVITY1, a conserved gene that regulates ethylene receptor function in Arabidopsis.</title>
        <authorList>
            <person name="Resnick J.S."/>
            <person name="Wen C.K."/>
            <person name="Shockey J.A."/>
            <person name="Chang C."/>
        </authorList>
    </citation>
    <scope>FUNCTION</scope>
    <scope>DISRUPTION PHENOTYPE</scope>
    <scope>MUTAGENESIS OF CYS-161</scope>
    <scope>INDUCTION BY ETHYLENE</scope>
</reference>
<reference key="6">
    <citation type="journal article" date="2007" name="Plant Physiol.">
        <title>RTE1 is a Golgi-associated and ETR1-dependent negative regulator of ethylene responses.</title>
        <authorList>
            <person name="Zhou X."/>
            <person name="Liu Q."/>
            <person name="Xie F."/>
            <person name="Wen C.K."/>
        </authorList>
    </citation>
    <scope>SUBCELLULAR LOCATION</scope>
</reference>
<reference key="7">
    <citation type="journal article" date="2008" name="Plant J.">
        <title>Subcellular co-localization of Arabidopsis RTE1 and ETR1 supports a regulatory role for RTE1 in ETR1 ethylene signaling.</title>
        <authorList>
            <person name="Dong C.H."/>
            <person name="Rivarola M."/>
            <person name="Resnick J.S."/>
            <person name="Maggin B.D."/>
            <person name="Chang C."/>
        </authorList>
    </citation>
    <scope>SUBCELLULAR LOCATION</scope>
    <scope>TISSUE SPECIFICITY</scope>
    <scope>INDUCTION BY ETHYLENE</scope>
</reference>
<reference key="8">
    <citation type="journal article" date="2008" name="Plant J.">
        <title>Involvement of RTE1 in conformational changes promoting ETR1 ethylene receptor signaling in Arabidopsis.</title>
        <authorList>
            <person name="Resnick J.S."/>
            <person name="Rivarola M."/>
            <person name="Chang C."/>
        </authorList>
    </citation>
    <scope>FUNCTION</scope>
</reference>
<reference key="9">
    <citation type="journal article" date="2009" name="Plant Physiol.">
        <title>ETR1-specific mutations distinguish ETR1 from other Arabidopsis ethylene receptors as revealed by genetic interaction with RTE1.</title>
        <authorList>
            <person name="Rivarola M."/>
            <person name="McClellan C.A."/>
            <person name="Resnick J.S."/>
            <person name="Chang C."/>
        </authorList>
    </citation>
    <scope>FUNCTION</scope>
</reference>
<reference key="10">
    <citation type="journal article" date="2010" name="J. Biol. Chem.">
        <title>Molecular association of the Arabidopsis ETR1 ethylene receptor and a regulator of ethylene signaling, RTE1.</title>
        <authorList>
            <person name="Dong C.H."/>
            <person name="Jang M."/>
            <person name="Scharein B."/>
            <person name="Malach A."/>
            <person name="Rivarola M."/>
            <person name="Liesch J."/>
            <person name="Groth G."/>
            <person name="Hwang I."/>
            <person name="Chang C."/>
        </authorList>
    </citation>
    <scope>INTERACTION WITH ETR1</scope>
    <scope>MUTAGENESIS OF CYS-161</scope>
</reference>
<sequence length="250" mass="27932">MSRGRGVPMMDLKRSYDVEDRVVSVSIPSIIEADEADLWPLPEIDTKKSKFPCCIVWTPLPVVSWLAPFIGHIGLCREDGVILDFAGSNFINVDDFAFGPPARYLQLDRTKCCLPPNMGGHTCKYGFKHTDFGTARTWDNALSSSTRSFEHKTYNIFTCNCHSFVANCLNRLCYGGSMEWNMVNVAILLMIKGKWINGSSVVRSFLPCAVVTSLGVVLVGWPFLIGLSSFSLLLFAWFIIATYCFKNIIT</sequence>
<feature type="chain" id="PRO_0000414064" description="Protein REVERSION-TO-ETHYLENE SENSITIVITY1">
    <location>
        <begin position="1"/>
        <end position="250"/>
    </location>
</feature>
<feature type="transmembrane region" description="Helical" evidence="1">
    <location>
        <begin position="55"/>
        <end position="75"/>
    </location>
</feature>
<feature type="transmembrane region" description="Helical" evidence="1">
    <location>
        <begin position="200"/>
        <end position="220"/>
    </location>
</feature>
<feature type="transmembrane region" description="Helical" evidence="1">
    <location>
        <begin position="221"/>
        <end position="241"/>
    </location>
</feature>
<feature type="mutagenesis site" description="Enhances ethylene sensitivity. Reduces ETR1 binding efficiency." evidence="2 7">
    <original>C</original>
    <variation>Y</variation>
    <location>
        <position position="161"/>
    </location>
</feature>
<organism>
    <name type="scientific">Arabidopsis thaliana</name>
    <name type="common">Mouse-ear cress</name>
    <dbReference type="NCBI Taxonomy" id="3702"/>
    <lineage>
        <taxon>Eukaryota</taxon>
        <taxon>Viridiplantae</taxon>
        <taxon>Streptophyta</taxon>
        <taxon>Embryophyta</taxon>
        <taxon>Tracheophyta</taxon>
        <taxon>Spermatophyta</taxon>
        <taxon>Magnoliopsida</taxon>
        <taxon>eudicotyledons</taxon>
        <taxon>Gunneridae</taxon>
        <taxon>Pentapetalae</taxon>
        <taxon>rosids</taxon>
        <taxon>malvids</taxon>
        <taxon>Brassicales</taxon>
        <taxon>Brassicaceae</taxon>
        <taxon>Camelineae</taxon>
        <taxon>Arabidopsis</taxon>
    </lineage>
</organism>
<gene>
    <name type="primary">RTE1</name>
    <name type="ordered locus">At2g26070</name>
    <name type="ORF">T19L18.12</name>
</gene>
<proteinExistence type="evidence at protein level"/>
<evidence type="ECO:0000255" key="1"/>
<evidence type="ECO:0000269" key="2">
    <source>
    </source>
</evidence>
<evidence type="ECO:0000269" key="3">
    <source>
    </source>
</evidence>
<evidence type="ECO:0000269" key="4">
    <source>
    </source>
</evidence>
<evidence type="ECO:0000269" key="5">
    <source>
    </source>
</evidence>
<evidence type="ECO:0000269" key="6">
    <source>
    </source>
</evidence>
<evidence type="ECO:0000269" key="7">
    <source>
    </source>
</evidence>
<evidence type="ECO:0000305" key="8"/>
<accession>F4ITL6</accession>
<accession>O80989</accession>
<accession>Q8GZ39</accession>
<dbReference type="EMBL" id="AC004747">
    <property type="protein sequence ID" value="AAC31229.1"/>
    <property type="status" value="ALT_SEQ"/>
    <property type="molecule type" value="Genomic_DNA"/>
</dbReference>
<dbReference type="EMBL" id="CP002685">
    <property type="protein sequence ID" value="AEC07792.1"/>
    <property type="molecule type" value="Genomic_DNA"/>
</dbReference>
<dbReference type="EMBL" id="AK117225">
    <property type="protein sequence ID" value="BAC41901.1"/>
    <property type="status" value="ALT_SEQ"/>
    <property type="molecule type" value="mRNA"/>
</dbReference>
<dbReference type="EMBL" id="BT003729">
    <property type="protein sequence ID" value="AAO39957.1"/>
    <property type="status" value="ALT_SEQ"/>
    <property type="molecule type" value="mRNA"/>
</dbReference>
<dbReference type="PIR" id="T02616">
    <property type="entry name" value="T02616"/>
</dbReference>
<dbReference type="RefSeq" id="NP_180177.2">
    <property type="nucleotide sequence ID" value="NM_128166.4"/>
</dbReference>
<dbReference type="SMR" id="F4ITL6"/>
<dbReference type="BioGRID" id="2500">
    <property type="interactions" value="6"/>
</dbReference>
<dbReference type="FunCoup" id="F4ITL6">
    <property type="interactions" value="3063"/>
</dbReference>
<dbReference type="IntAct" id="F4ITL6">
    <property type="interactions" value="2"/>
</dbReference>
<dbReference type="STRING" id="3702.F4ITL6"/>
<dbReference type="PaxDb" id="3702-AT2G26070.1"/>
<dbReference type="ProteomicsDB" id="226634"/>
<dbReference type="EnsemblPlants" id="AT2G26070.1">
    <property type="protein sequence ID" value="AT2G26070.1"/>
    <property type="gene ID" value="AT2G26070"/>
</dbReference>
<dbReference type="GeneID" id="817148"/>
<dbReference type="Gramene" id="AT2G26070.1">
    <property type="protein sequence ID" value="AT2G26070.1"/>
    <property type="gene ID" value="AT2G26070"/>
</dbReference>
<dbReference type="KEGG" id="ath:AT2G26070"/>
<dbReference type="Araport" id="AT2G26070"/>
<dbReference type="TAIR" id="AT2G26070">
    <property type="gene designation" value="RTE1"/>
</dbReference>
<dbReference type="eggNOG" id="KOG3150">
    <property type="taxonomic scope" value="Eukaryota"/>
</dbReference>
<dbReference type="HOGENOM" id="CLU_075672_0_0_1"/>
<dbReference type="InParanoid" id="F4ITL6"/>
<dbReference type="PRO" id="PR:F4ITL6"/>
<dbReference type="Proteomes" id="UP000006548">
    <property type="component" value="Chromosome 2"/>
</dbReference>
<dbReference type="ExpressionAtlas" id="F4ITL6">
    <property type="expression patterns" value="baseline and differential"/>
</dbReference>
<dbReference type="GO" id="GO:0005783">
    <property type="term" value="C:endoplasmic reticulum"/>
    <property type="evidence" value="ECO:0000314"/>
    <property type="project" value="TAIR"/>
</dbReference>
<dbReference type="GO" id="GO:0005789">
    <property type="term" value="C:endoplasmic reticulum membrane"/>
    <property type="evidence" value="ECO:0007669"/>
    <property type="project" value="UniProtKB-SubCell"/>
</dbReference>
<dbReference type="GO" id="GO:0005794">
    <property type="term" value="C:Golgi apparatus"/>
    <property type="evidence" value="ECO:0000314"/>
    <property type="project" value="TAIR"/>
</dbReference>
<dbReference type="GO" id="GO:0000139">
    <property type="term" value="C:Golgi membrane"/>
    <property type="evidence" value="ECO:0007669"/>
    <property type="project" value="UniProtKB-SubCell"/>
</dbReference>
<dbReference type="GO" id="GO:0010105">
    <property type="term" value="P:negative regulation of ethylene-activated signaling pathway"/>
    <property type="evidence" value="ECO:0000315"/>
    <property type="project" value="TAIR"/>
</dbReference>
<dbReference type="GO" id="GO:0009723">
    <property type="term" value="P:response to ethylene"/>
    <property type="evidence" value="ECO:0000270"/>
    <property type="project" value="TAIR"/>
</dbReference>
<dbReference type="InterPro" id="IPR008496">
    <property type="entry name" value="TMEM222/RTE1"/>
</dbReference>
<dbReference type="PANTHER" id="PTHR20921:SF7">
    <property type="entry name" value="PROTEIN REVERSION-TO-ETHYLENE SENSITIVITY1"/>
    <property type="match status" value="1"/>
</dbReference>
<dbReference type="PANTHER" id="PTHR20921">
    <property type="entry name" value="TRANSMEMBRANE PROTEIN 222"/>
    <property type="match status" value="1"/>
</dbReference>
<dbReference type="Pfam" id="PF05608">
    <property type="entry name" value="RTE1"/>
    <property type="match status" value="1"/>
</dbReference>
<comment type="function">
    <text evidence="2 5 6">Acts at an early step in the ethylene signaling pathway. Positively regulates ETR1, leading to the negative regulation of ethylene responses.</text>
</comment>
<comment type="subunit">
    <text evidence="7">Interacts with ETR1 through a region corresponding to its ethylene-binding domain.</text>
</comment>
<comment type="interaction">
    <interactant intactId="EBI-2437263">
        <id>F4ITL6</id>
    </interactant>
    <interactant intactId="EBI-1606682">
        <id>P49333</id>
        <label>ETR1</label>
    </interactant>
    <organismsDiffer>false</organismsDiffer>
    <experiments>5</experiments>
</comment>
<comment type="subcellular location">
    <subcellularLocation>
        <location evidence="3 4">Endoplasmic reticulum membrane</location>
        <topology evidence="1">Multi-pass membrane protein</topology>
    </subcellularLocation>
    <subcellularLocation>
        <location evidence="3 4">Golgi apparatus membrane</location>
        <topology evidence="1">Multi-pass membrane protein</topology>
    </subcellularLocation>
</comment>
<comment type="tissue specificity">
    <text evidence="4">Strongly expressed in 1-4-day-old seedlings in the apical hook, cotyledons, root vascular tissue, root tip and root hairs, with little or no expression in the hypocotyl. In light-grown seedlings, expression could also be seen in the apex and young leaves, and disappeared from the cotyledons by 10 days. In mature plants, expressed in floral buds, the style of mature flowers, stems and the rachis.</text>
</comment>
<comment type="induction">
    <text evidence="2 4">By ethylene.</text>
</comment>
<comment type="disruption phenotype">
    <text evidence="2">Enhanced ethylene sensitivity.</text>
</comment>
<comment type="sequence caution" evidence="8">
    <conflict type="erroneous gene model prediction">
        <sequence resource="EMBL-CDS" id="AAC31229"/>
    </conflict>
</comment>
<comment type="sequence caution" evidence="8">
    <conflict type="miscellaneous discrepancy">
        <sequence resource="EMBL-CDS" id="AAO39957"/>
    </conflict>
    <text>Sequencing errors.</text>
</comment>
<comment type="sequence caution" evidence="8">
    <conflict type="miscellaneous discrepancy">
        <sequence resource="EMBL-CDS" id="BAC41901"/>
    </conflict>
    <text>Sequencing errors.</text>
</comment>
<keyword id="KW-0256">Endoplasmic reticulum</keyword>
<keyword id="KW-0333">Golgi apparatus</keyword>
<keyword id="KW-0472">Membrane</keyword>
<keyword id="KW-1185">Reference proteome</keyword>
<keyword id="KW-0812">Transmembrane</keyword>
<keyword id="KW-1133">Transmembrane helix</keyword>
<protein>
    <recommendedName>
        <fullName>Protein REVERSION-TO-ETHYLENE SENSITIVITY1</fullName>
    </recommendedName>
</protein>
<name>RTE1_ARATH</name>